<keyword id="KW-0002">3D-structure</keyword>
<keyword id="KW-0106">Calcium</keyword>
<keyword id="KW-0903">Direct protein sequencing</keyword>
<keyword id="KW-0430">Lectin</keyword>
<keyword id="KW-0464">Manganese</keyword>
<keyword id="KW-0465">Mannose-binding</keyword>
<keyword id="KW-0479">Metal-binding</keyword>
<keyword id="KW-0800">Toxin</keyword>
<dbReference type="PDB" id="1H9P">
    <property type="method" value="X-ray"/>
    <property type="resolution" value="2.00 A"/>
    <property type="chains" value="A=1-237"/>
</dbReference>
<dbReference type="PDB" id="1H9W">
    <property type="method" value="X-ray"/>
    <property type="resolution" value="2.00 A"/>
    <property type="chains" value="A/B=1-237"/>
</dbReference>
<dbReference type="PDB" id="2JDZ">
    <property type="method" value="X-ray"/>
    <property type="resolution" value="2.10 A"/>
    <property type="chains" value="A=1-237"/>
</dbReference>
<dbReference type="PDB" id="2JE7">
    <property type="method" value="X-ray"/>
    <property type="resolution" value="1.65 A"/>
    <property type="chains" value="A=1-237"/>
</dbReference>
<dbReference type="PDBsum" id="1H9P"/>
<dbReference type="PDBsum" id="1H9W"/>
<dbReference type="PDBsum" id="2JDZ"/>
<dbReference type="PDBsum" id="2JE7"/>
<dbReference type="SMR" id="P81637"/>
<dbReference type="UniLectin" id="P81637"/>
<dbReference type="EvolutionaryTrace" id="P81637"/>
<dbReference type="GO" id="GO:0030246">
    <property type="term" value="F:carbohydrate binding"/>
    <property type="evidence" value="ECO:0000314"/>
    <property type="project" value="UniProtKB"/>
</dbReference>
<dbReference type="GO" id="GO:0005537">
    <property type="term" value="F:D-mannose binding"/>
    <property type="evidence" value="ECO:0007669"/>
    <property type="project" value="UniProtKB-KW"/>
</dbReference>
<dbReference type="GO" id="GO:0046872">
    <property type="term" value="F:metal ion binding"/>
    <property type="evidence" value="ECO:0007669"/>
    <property type="project" value="UniProtKB-KW"/>
</dbReference>
<dbReference type="GO" id="GO:0090729">
    <property type="term" value="F:toxin activity"/>
    <property type="evidence" value="ECO:0007669"/>
    <property type="project" value="UniProtKB-KW"/>
</dbReference>
<dbReference type="FunFam" id="2.60.120.200:FF:000227">
    <property type="entry name" value="Concanavalin-A"/>
    <property type="match status" value="1"/>
</dbReference>
<dbReference type="Gene3D" id="2.60.120.200">
    <property type="match status" value="1"/>
</dbReference>
<dbReference type="InterPro" id="IPR013320">
    <property type="entry name" value="ConA-like_dom_sf"/>
</dbReference>
<dbReference type="InterPro" id="IPR000985">
    <property type="entry name" value="Lectin_LegA_CS"/>
</dbReference>
<dbReference type="InterPro" id="IPR019825">
    <property type="entry name" value="Lectin_legB_Mn/Ca_BS"/>
</dbReference>
<dbReference type="InterPro" id="IPR001220">
    <property type="entry name" value="Legume_lectin_dom"/>
</dbReference>
<dbReference type="InterPro" id="IPR050258">
    <property type="entry name" value="Leguminous_Lectin"/>
</dbReference>
<dbReference type="PANTHER" id="PTHR32401">
    <property type="entry name" value="CONCANAVALIN A-LIKE LECTIN FAMILY PROTEIN"/>
    <property type="match status" value="1"/>
</dbReference>
<dbReference type="PANTHER" id="PTHR32401:SF47">
    <property type="entry name" value="LEGUME LECTIN DOMAIN-CONTAINING PROTEIN"/>
    <property type="match status" value="1"/>
</dbReference>
<dbReference type="Pfam" id="PF00139">
    <property type="entry name" value="Lectin_legB"/>
    <property type="match status" value="2"/>
</dbReference>
<dbReference type="SUPFAM" id="SSF49899">
    <property type="entry name" value="Concanavalin A-like lectins/glucanases"/>
    <property type="match status" value="1"/>
</dbReference>
<dbReference type="PROSITE" id="PS00308">
    <property type="entry name" value="LECTIN_LEGUME_ALPHA"/>
    <property type="match status" value="1"/>
</dbReference>
<dbReference type="PROSITE" id="PS00307">
    <property type="entry name" value="LECTIN_LEGUME_BETA"/>
    <property type="match status" value="1"/>
</dbReference>
<proteinExistence type="evidence at protein level"/>
<sequence>ADTIVAVELDSYPNTDIGDPSYPHIGIDIKSIRSKSTARWNMQTGKVGTAHISYNSVAKRLSAVVSYTGSSSTTVSYDVDLNNVLPEWVRVGLSATTGLYKETNTILSWSFTSKLKTNSIADANSLHFSFNQFSQNPKDLILQSDATTDSDGNLELTKVSSSGDPQGSSVGRALFYAPVHIWEKSAVVAGFDATFTFLIKSPDRDPADGITFFIANTDTSIPSGSGGRLLGLFPDAN</sequence>
<accession>P81637</accession>
<name>LECA_DIOGU</name>
<reference key="1">
    <citation type="journal article" date="1999" name="Biochim. Biophys. Acta">
        <title>Molecular characterization and crystallization of Diocleinae lectins.</title>
        <authorList>
            <person name="Calvete J.J."/>
            <person name="Thole H.H."/>
            <person name="Raida M."/>
            <person name="Urbanke C."/>
            <person name="Romero A."/>
            <person name="Grangeiro T.B."/>
            <person name="Ramos M.V."/>
            <person name="Almeida da Rocha I.M."/>
            <person name="Guimaraes F.N."/>
            <person name="Cavada B.S."/>
        </authorList>
    </citation>
    <scope>PROTEIN SEQUENCE</scope>
    <scope>SUBUNIT</scope>
    <scope>MASS SPECTROMETRY</scope>
    <scope>CRYSTALLIZATION</scope>
    <scope>PRELIMINARY X-RAY CRYSTALLOGRAPHY (2.5 ANGSTROMS)</scope>
    <source>
        <tissue>Seed</tissue>
    </source>
</reference>
<reference key="2">
    <citation type="journal article" date="1992" name="Immunol. Invest.">
        <title>Human lymphocyte stimulation by legume lectins from the Diocleae tribe.</title>
        <authorList>
            <person name="Barral-Netto M."/>
            <person name="Santos S.B."/>
            <person name="Barral A."/>
            <person name="Moreira L.I."/>
            <person name="Santos C.F."/>
            <person name="Moreira R.A."/>
            <person name="Oliveira J.T."/>
            <person name="Cavada B.S."/>
        </authorList>
    </citation>
    <scope>FUNCTION</scope>
</reference>
<reference key="3">
    <citation type="journal article" date="1994" name="Agents Actions">
        <title>Histamine release induced by glucose (mannose)-specific lectins isolated from Brazilian beans. Comparison with concanavalin A.</title>
        <authorList>
            <person name="Gomes J.C."/>
            <person name="Ferreira R.R."/>
            <person name="Cavada B.S."/>
            <person name="Moreira R.A."/>
            <person name="Oliveira J.T."/>
        </authorList>
    </citation>
    <scope>FUNCTION</scope>
    <scope>CALCIUM-BINDING</scope>
</reference>
<reference key="4">
    <citation type="journal article" date="1997" name="Mediators Inflamm.">
        <title>Anti-inflammatory effect of glucose-mannose binding lectins isolated from Brazilian beans.</title>
        <authorList>
            <person name="Assreuy A.M."/>
            <person name="Shibuya M.D."/>
            <person name="Martins G.J."/>
            <person name="De Souza M.L."/>
            <person name="Cavada B.S."/>
            <person name="Moreira R.A."/>
            <person name="Oliveira J.T."/>
            <person name="Ribeiro R.A."/>
            <person name="Flores C.A."/>
        </authorList>
    </citation>
    <scope>FUNCTION</scope>
</reference>
<reference key="5">
    <citation type="journal article" date="1998" name="J. Biol. Chem.">
        <title>Diocleinae lectins are a group of proteins with conserved binding sites for the core trimannoside of asparagine-linked oligosaccharides and differential specificities for complex carbohydrates.</title>
        <authorList>
            <person name="Dam T.K."/>
            <person name="Cavada B.S."/>
            <person name="Grangeiro T.B."/>
            <person name="Santos C.F."/>
            <person name="de Sousa F.A.M."/>
            <person name="Oscarson S."/>
            <person name="Brewer C.F."/>
        </authorList>
    </citation>
    <scope>FUNCTION</scope>
</reference>
<reference key="6">
    <citation type="journal article" date="2000" name="Biochemistry">
        <title>Demonstration of a conserved histidine and two water ligands at the Mn2+ site in Diocleinae lectins by pulsed EPR spectroscopy.</title>
        <authorList>
            <person name="Lee H.C."/>
            <person name="Goroncy A.K."/>
            <person name="Peisach J."/>
            <person name="Cavada B.S."/>
            <person name="Grangeiro T.B."/>
            <person name="Ramos M.V."/>
            <person name="Sampaio A.H."/>
            <person name="Dam T.K."/>
            <person name="Brewer C.F."/>
        </authorList>
    </citation>
    <scope>MANGANESE-BINDING</scope>
</reference>
<reference key="7">
    <citation type="journal article" date="2000" name="J. Biol. Chem.">
        <title>Thermodynamic binding studies of lectins from the diocleinae subtribe to deoxy analogs of the core trimannoside of asparagine-linked oligosaccharides.</title>
        <authorList>
            <person name="Dam T.K."/>
            <person name="Cavada B.S."/>
            <person name="Grangeiro T.B."/>
            <person name="Santos C.F."/>
            <person name="Ceccatto V.M."/>
            <person name="de Sousa F.A."/>
            <person name="Oscarson S."/>
            <person name="Brewer C.F."/>
        </authorList>
    </citation>
    <scope>FUNCTION</scope>
</reference>
<reference key="8">
    <citation type="journal article" date="2010" name="Bioresour. Technol.">
        <title>Toxicity of some glucose/mannose-binding lectins to Biomphalaria glabrata and Artemia salina.</title>
        <authorList>
            <person name="dos Santos A.F."/>
            <person name="Cavada B.S."/>
            <person name="da Rocha B.A."/>
            <person name="do Nascimento K.S."/>
            <person name="Sant'Ana A.E."/>
        </authorList>
    </citation>
    <scope>TOXIC DOSE</scope>
</reference>
<reference key="9">
    <citation type="journal article" date="2001" name="J. Mol. Biol.">
        <title>Crystal structure of native and Cd/Cd-substituted Dioclea guianensis seed lectin. A novel manganese-binding site and structural basis of dimer-tetramer association.</title>
        <authorList>
            <person name="Wah D.A."/>
            <person name="Romero A."/>
            <person name="Gallego del Sol F."/>
            <person name="Cavada B.S."/>
            <person name="Ramos M.V."/>
            <person name="Grangeiro T.B."/>
            <person name="Sampaio A.H."/>
            <person name="Calvete J.J."/>
        </authorList>
    </citation>
    <scope>X-RAY CRYSTALLOGRAPHY (2.0 ANGSTROMS)</scope>
    <scope>METAL-BINDING SITES</scope>
</reference>
<protein>
    <recommendedName>
        <fullName>Lectin alpha chain</fullName>
    </recommendedName>
    <component>
        <recommendedName>
            <fullName>Lectin beta chain</fullName>
        </recommendedName>
    </component>
    <component>
        <recommendedName>
            <fullName>Lectin gamma-1 chain</fullName>
        </recommendedName>
    </component>
    <component>
        <recommendedName>
            <fullName>Lectin gamma-2 chain</fullName>
        </recommendedName>
    </component>
</protein>
<evidence type="ECO:0000250" key="1"/>
<evidence type="ECO:0000269" key="2">
    <source>
    </source>
</evidence>
<evidence type="ECO:0000269" key="3">
    <source>
    </source>
</evidence>
<evidence type="ECO:0000269" key="4">
    <source>
    </source>
</evidence>
<evidence type="ECO:0000269" key="5">
    <source>
    </source>
</evidence>
<evidence type="ECO:0000269" key="6">
    <source>
    </source>
</evidence>
<evidence type="ECO:0000269" key="7">
    <source>
    </source>
</evidence>
<evidence type="ECO:0000269" key="8">
    <source>
    </source>
</evidence>
<evidence type="ECO:0000305" key="9"/>
<evidence type="ECO:0007829" key="10">
    <source>
        <dbReference type="PDB" id="2JE7"/>
    </source>
</evidence>
<organism>
    <name type="scientific">Dioclea guianensis</name>
    <dbReference type="NCBI Taxonomy" id="99571"/>
    <lineage>
        <taxon>Eukaryota</taxon>
        <taxon>Viridiplantae</taxon>
        <taxon>Streptophyta</taxon>
        <taxon>Embryophyta</taxon>
        <taxon>Tracheophyta</taxon>
        <taxon>Spermatophyta</taxon>
        <taxon>Magnoliopsida</taxon>
        <taxon>eudicotyledons</taxon>
        <taxon>Gunneridae</taxon>
        <taxon>Pentapetalae</taxon>
        <taxon>rosids</taxon>
        <taxon>fabids</taxon>
        <taxon>Fabales</taxon>
        <taxon>Fabaceae</taxon>
        <taxon>Papilionoideae</taxon>
        <taxon>50 kb inversion clade</taxon>
        <taxon>NPAAA clade</taxon>
        <taxon>indigoferoid/millettioid clade</taxon>
        <taxon>Phaseoleae</taxon>
        <taxon>Dioclea</taxon>
    </lineage>
</organism>
<comment type="function">
    <text evidence="3 4 5 7 8">D-mannose/D-glucose-binding lectin. Has anti-inflammatory activity in rats. Induces histamine release in mast cells from rat. Induces lymphocyte proliferation and IFNG production.</text>
</comment>
<comment type="subunit">
    <text evidence="2">Equilibrium between homodimer and homotetramer. Oligomerization is pH-dependent with homotetramers forming at pH 6.5 and above.</text>
</comment>
<comment type="PTM">
    <text>The beta and gamma chains are produced by partial proteolytic processing of the lectin alpha chain by an asparaginyl endopeptidase. Mixture of 60% alpha lectin and 40% of its beta and gamma proteolytic fragments.</text>
</comment>
<comment type="mass spectrometry">
    <molecule>Lectin alpha chain</molecule>
</comment>
<comment type="mass spectrometry">
    <molecule>Lectin beta chain</molecule>
</comment>
<comment type="mass spectrometry">
    <molecule>Lectin gamma-1 chain</molecule>
</comment>
<comment type="mass spectrometry">
    <molecule>Lectin gamma-2 chain</molecule>
</comment>
<comment type="toxic dose">
    <text evidence="6">LD(50) is 5.21 ug/ml against the brine shrimp A.salina.</text>
</comment>
<comment type="toxic dose">
    <text evidence="6">LD(50) is 23.1 ug/ml against the aquatic snail B.glabrata.</text>
</comment>
<comment type="miscellaneous">
    <text>Binds one manganese (or another transition metal) ion and one calcium ion. The metal ions are essential for the saccharide-binding and cell-agglutinating activities.</text>
</comment>
<comment type="miscellaneous">
    <text>Is being tested as a molluscicide with potential application in controlling schistosomiasis. The causative agent of schistosomiasis depends on freshwater snails of the genus Biomphalaria as hosts during its larval stages.</text>
</comment>
<comment type="similarity">
    <text evidence="9">Belongs to the leguminous lectin family.</text>
</comment>
<feature type="chain" id="PRO_0000017600" description="Lectin alpha chain">
    <location>
        <begin position="1"/>
        <end position="237"/>
    </location>
</feature>
<feature type="chain" id="PRO_0000017601" description="Lectin beta chain">
    <location>
        <begin position="1"/>
        <end position="118"/>
    </location>
</feature>
<feature type="chain" id="PRO_0000017602" description="Lectin gamma-1 chain">
    <location>
        <begin position="119"/>
        <end position="237"/>
    </location>
</feature>
<feature type="chain" id="PRO_0000017603" description="Lectin gamma-2 chain">
    <location>
        <begin position="125"/>
        <end position="237"/>
    </location>
</feature>
<feature type="binding site">
    <location>
        <position position="8"/>
    </location>
    <ligand>
        <name>Mn(2+)</name>
        <dbReference type="ChEBI" id="CHEBI:29035"/>
    </ligand>
</feature>
<feature type="binding site">
    <location>
        <position position="10"/>
    </location>
    <ligand>
        <name>Ca(2+)</name>
        <dbReference type="ChEBI" id="CHEBI:29108"/>
    </ligand>
</feature>
<feature type="binding site">
    <location>
        <position position="10"/>
    </location>
    <ligand>
        <name>Mn(2+)</name>
        <dbReference type="ChEBI" id="CHEBI:29035"/>
    </ligand>
</feature>
<feature type="binding site" evidence="1">
    <location>
        <position position="12"/>
    </location>
    <ligand>
        <name>a carbohydrate</name>
        <dbReference type="ChEBI" id="CHEBI:16646"/>
    </ligand>
</feature>
<feature type="binding site">
    <location>
        <position position="12"/>
    </location>
    <ligand>
        <name>Ca(2+)</name>
        <dbReference type="ChEBI" id="CHEBI:29108"/>
    </ligand>
</feature>
<feature type="binding site">
    <location>
        <position position="14"/>
    </location>
    <ligand>
        <name>Ca(2+)</name>
        <dbReference type="ChEBI" id="CHEBI:29108"/>
    </ligand>
</feature>
<feature type="binding site">
    <location>
        <position position="19"/>
    </location>
    <ligand>
        <name>Ca(2+)</name>
        <dbReference type="ChEBI" id="CHEBI:29108"/>
    </ligand>
</feature>
<feature type="binding site">
    <location>
        <position position="19"/>
    </location>
    <ligand>
        <name>Mn(2+)</name>
        <dbReference type="ChEBI" id="CHEBI:29035"/>
    </ligand>
</feature>
<feature type="binding site">
    <location>
        <position position="24"/>
    </location>
    <ligand>
        <name>Mn(2+)</name>
        <dbReference type="ChEBI" id="CHEBI:29035"/>
    </ligand>
</feature>
<feature type="binding site" evidence="1">
    <location>
        <position position="34"/>
    </location>
    <ligand>
        <name>Mn(2+)</name>
        <dbReference type="ChEBI" id="CHEBI:29035"/>
    </ligand>
</feature>
<feature type="binding site" evidence="1">
    <location>
        <begin position="99"/>
        <end position="100"/>
    </location>
    <ligand>
        <name>a carbohydrate</name>
        <dbReference type="ChEBI" id="CHEBI:16646"/>
    </ligand>
</feature>
<feature type="binding site">
    <location>
        <position position="208"/>
    </location>
    <ligand>
        <name>Ca(2+)</name>
        <dbReference type="ChEBI" id="CHEBI:29108"/>
    </ligand>
</feature>
<feature type="binding site" evidence="1">
    <location>
        <position position="228"/>
    </location>
    <ligand>
        <name>a carbohydrate</name>
        <dbReference type="ChEBI" id="CHEBI:16646"/>
    </ligand>
</feature>
<feature type="strand" evidence="10">
    <location>
        <begin position="4"/>
        <end position="10"/>
    </location>
</feature>
<feature type="helix" evidence="10">
    <location>
        <begin position="15"/>
        <end position="17"/>
    </location>
</feature>
<feature type="strand" evidence="10">
    <location>
        <begin position="24"/>
        <end position="33"/>
    </location>
</feature>
<feature type="strand" evidence="10">
    <location>
        <begin position="35"/>
        <end position="39"/>
    </location>
</feature>
<feature type="strand" evidence="10">
    <location>
        <begin position="46"/>
        <end position="55"/>
    </location>
</feature>
<feature type="turn" evidence="10">
    <location>
        <begin position="56"/>
        <end position="59"/>
    </location>
</feature>
<feature type="strand" evidence="10">
    <location>
        <begin position="60"/>
        <end position="67"/>
    </location>
</feature>
<feature type="turn" evidence="10">
    <location>
        <begin position="68"/>
        <end position="70"/>
    </location>
</feature>
<feature type="strand" evidence="10">
    <location>
        <begin position="71"/>
        <end position="78"/>
    </location>
</feature>
<feature type="helix" evidence="10">
    <location>
        <begin position="81"/>
        <end position="84"/>
    </location>
</feature>
<feature type="strand" evidence="10">
    <location>
        <begin position="87"/>
        <end position="96"/>
    </location>
</feature>
<feature type="strand" evidence="10">
    <location>
        <begin position="105"/>
        <end position="116"/>
    </location>
</feature>
<feature type="strand" evidence="10">
    <location>
        <begin position="118"/>
        <end position="121"/>
    </location>
</feature>
<feature type="strand" evidence="10">
    <location>
        <begin position="123"/>
        <end position="132"/>
    </location>
</feature>
<feature type="strand" evidence="10">
    <location>
        <begin position="140"/>
        <end position="144"/>
    </location>
</feature>
<feature type="strand" evidence="10">
    <location>
        <begin position="154"/>
        <end position="157"/>
    </location>
</feature>
<feature type="strand" evidence="10">
    <location>
        <begin position="170"/>
        <end position="177"/>
    </location>
</feature>
<feature type="strand" evidence="10">
    <location>
        <begin position="187"/>
        <end position="198"/>
    </location>
</feature>
<feature type="strand" evidence="10">
    <location>
        <begin position="202"/>
        <end position="205"/>
    </location>
</feature>
<feature type="strand" evidence="10">
    <location>
        <begin position="209"/>
        <end position="216"/>
    </location>
</feature>
<feature type="helix" evidence="10">
    <location>
        <begin position="227"/>
        <end position="229"/>
    </location>
</feature>
<feature type="turn" evidence="10">
    <location>
        <begin position="230"/>
        <end position="232"/>
    </location>
</feature>